<feature type="chain" id="PRO_0000308372" description="Keratin, type I cytoskeletal 9">
    <location>
        <begin position="1"/>
        <end position="743"/>
    </location>
</feature>
<feature type="domain" description="IF rod" evidence="4">
    <location>
        <begin position="131"/>
        <end position="443"/>
    </location>
</feature>
<feature type="region of interest" description="Head" evidence="3">
    <location>
        <begin position="1"/>
        <end position="130"/>
    </location>
</feature>
<feature type="region of interest" description="Disordered" evidence="5">
    <location>
        <begin position="1"/>
        <end position="46"/>
    </location>
</feature>
<feature type="region of interest" description="Coil 1A" evidence="3">
    <location>
        <begin position="131"/>
        <end position="166"/>
    </location>
</feature>
<feature type="region of interest" description="Linker 1" evidence="3">
    <location>
        <begin position="167"/>
        <end position="185"/>
    </location>
</feature>
<feature type="region of interest" description="Coil 1B" evidence="3">
    <location>
        <begin position="186"/>
        <end position="277"/>
    </location>
</feature>
<feature type="region of interest" description="Linker 12" evidence="3">
    <location>
        <begin position="278"/>
        <end position="300"/>
    </location>
</feature>
<feature type="region of interest" description="Coil 2" evidence="3">
    <location>
        <begin position="301"/>
        <end position="439"/>
    </location>
</feature>
<feature type="region of interest" description="Tail" evidence="3">
    <location>
        <begin position="440"/>
        <end position="709"/>
    </location>
</feature>
<feature type="region of interest" description="Disordered" evidence="5">
    <location>
        <begin position="440"/>
        <end position="468"/>
    </location>
</feature>
<feature type="region of interest" description="Disordered" evidence="5">
    <location>
        <begin position="501"/>
        <end position="743"/>
    </location>
</feature>
<feature type="compositionally biased region" description="Low complexity" evidence="5">
    <location>
        <begin position="1"/>
        <end position="16"/>
    </location>
</feature>
<feature type="compositionally biased region" description="Gly residues" evidence="5">
    <location>
        <begin position="17"/>
        <end position="28"/>
    </location>
</feature>
<feature type="compositionally biased region" description="Low complexity" evidence="5">
    <location>
        <begin position="29"/>
        <end position="39"/>
    </location>
</feature>
<feature type="compositionally biased region" description="Gly residues" evidence="5">
    <location>
        <begin position="449"/>
        <end position="468"/>
    </location>
</feature>
<feature type="compositionally biased region" description="Gly residues" evidence="5">
    <location>
        <begin position="501"/>
        <end position="717"/>
    </location>
</feature>
<feature type="modified residue" description="Phosphoserine" evidence="1">
    <location>
        <position position="14"/>
    </location>
</feature>
<feature type="modified residue" description="Phosphoserine" evidence="1">
    <location>
        <position position="16"/>
    </location>
</feature>
<feature type="modified residue" description="Phosphoserine" evidence="1">
    <location>
        <position position="55"/>
    </location>
</feature>
<feature type="modified residue" description="Phosphoserine" evidence="1">
    <location>
        <position position="155"/>
    </location>
</feature>
<feature type="sequence conflict" description="In Ref. 1; AAR89518." evidence="7" ref="1">
    <original>S</original>
    <variation>T</variation>
    <location>
        <position position="226"/>
    </location>
</feature>
<feature type="sequence conflict" description="In Ref. 1; AAR89518." evidence="7" ref="1">
    <original>S</original>
    <variation>N</variation>
    <location>
        <position position="258"/>
    </location>
</feature>
<feature type="sequence conflict" description="In Ref. 1; AAR89518." evidence="7" ref="1">
    <original>T</original>
    <variation>P</variation>
    <location>
        <position position="267"/>
    </location>
</feature>
<feature type="sequence conflict" description="In Ref. 1; AAR89518." evidence="7" ref="1">
    <original>R</original>
    <variation>Q</variation>
    <location>
        <position position="299"/>
    </location>
</feature>
<feature type="sequence conflict" description="In Ref. 1; AAR89518." evidence="7" ref="1">
    <original>Q</original>
    <variation>H</variation>
    <location>
        <position position="332"/>
    </location>
</feature>
<feature type="sequence conflict" description="In Ref. 1; AAR89518." evidence="7" ref="1">
    <original>M</original>
    <variation>V</variation>
    <location>
        <position position="334"/>
    </location>
</feature>
<feature type="sequence conflict" description="In Ref. 1; AAR89518." evidence="7" ref="1">
    <original>S</original>
    <variation>T</variation>
    <location>
        <position position="605"/>
    </location>
</feature>
<protein>
    <recommendedName>
        <fullName>Keratin, type I cytoskeletal 9</fullName>
    </recommendedName>
    <alternativeName>
        <fullName>Cytokeratin-9</fullName>
        <shortName>CK-9</shortName>
    </alternativeName>
    <alternativeName>
        <fullName>Keratin-9</fullName>
        <shortName>K9</shortName>
    </alternativeName>
</protein>
<comment type="function">
    <text evidence="2 6">May serve an important special function either in the mature palmar and plantar skin tissue or in the morphogenetic program of the formation of these tissues. Plays a role in keratin filament assembly (By similarity). Plays an essential role in the correct development of sperm.</text>
</comment>
<comment type="subunit">
    <text evidence="7">Heterotetramer of two type I and two type II keratins.</text>
</comment>
<comment type="tissue specificity">
    <text evidence="6">Expressed in footpad epidermis and testis (at protein level).</text>
</comment>
<comment type="miscellaneous">
    <text evidence="7">There are two types of cytoskeletal and microfibrillar keratin, I (acidic) and II (neutral to basic) (40-55 and 56-70 kDa, respectively).</text>
</comment>
<comment type="similarity">
    <text evidence="4">Belongs to the intermediate filament family.</text>
</comment>
<reference evidence="8" key="1">
    <citation type="journal article" date="2005" name="Mol. Reprod. Dev.">
        <title>Sperm tail abnormalities in mutant mice with neo(r) gene insertion into an intron of the keratin 9 gene.</title>
        <authorList>
            <person name="Rivkin E."/>
            <person name="Eddy E.M."/>
            <person name="Willis W.D."/>
            <person name="Goulding E.H."/>
            <person name="Suganuma R."/>
            <person name="Yanagimachi R."/>
            <person name="Kierszenbaum A.L."/>
        </authorList>
    </citation>
    <scope>NUCLEOTIDE SEQUENCE [MRNA]</scope>
    <scope>FUNCTION</scope>
    <scope>TISSUE SPECIFICITY</scope>
    <source>
        <strain evidence="8">129/SvJ</strain>
    </source>
</reference>
<reference key="2">
    <citation type="journal article" date="2009" name="PLoS Biol.">
        <title>Lineage-specific biology revealed by a finished genome assembly of the mouse.</title>
        <authorList>
            <person name="Church D.M."/>
            <person name="Goodstadt L."/>
            <person name="Hillier L.W."/>
            <person name="Zody M.C."/>
            <person name="Goldstein S."/>
            <person name="She X."/>
            <person name="Bult C.J."/>
            <person name="Agarwala R."/>
            <person name="Cherry J.L."/>
            <person name="DiCuccio M."/>
            <person name="Hlavina W."/>
            <person name="Kapustin Y."/>
            <person name="Meric P."/>
            <person name="Maglott D."/>
            <person name="Birtle Z."/>
            <person name="Marques A.C."/>
            <person name="Graves T."/>
            <person name="Zhou S."/>
            <person name="Teague B."/>
            <person name="Potamousis K."/>
            <person name="Churas C."/>
            <person name="Place M."/>
            <person name="Herschleb J."/>
            <person name="Runnheim R."/>
            <person name="Forrest D."/>
            <person name="Amos-Landgraf J."/>
            <person name="Schwartz D.C."/>
            <person name="Cheng Z."/>
            <person name="Lindblad-Toh K."/>
            <person name="Eichler E.E."/>
            <person name="Ponting C.P."/>
        </authorList>
    </citation>
    <scope>NUCLEOTIDE SEQUENCE [LARGE SCALE GENOMIC DNA]</scope>
    <source>
        <strain>C57BL/6J</strain>
    </source>
</reference>
<keyword id="KW-0175">Coiled coil</keyword>
<keyword id="KW-0403">Intermediate filament</keyword>
<keyword id="KW-0416">Keratin</keyword>
<keyword id="KW-0597">Phosphoprotein</keyword>
<keyword id="KW-1185">Reference proteome</keyword>
<organism>
    <name type="scientific">Mus musculus</name>
    <name type="common">Mouse</name>
    <dbReference type="NCBI Taxonomy" id="10090"/>
    <lineage>
        <taxon>Eukaryota</taxon>
        <taxon>Metazoa</taxon>
        <taxon>Chordata</taxon>
        <taxon>Craniata</taxon>
        <taxon>Vertebrata</taxon>
        <taxon>Euteleostomi</taxon>
        <taxon>Mammalia</taxon>
        <taxon>Eutheria</taxon>
        <taxon>Euarchontoglires</taxon>
        <taxon>Glires</taxon>
        <taxon>Rodentia</taxon>
        <taxon>Myomorpha</taxon>
        <taxon>Muroidea</taxon>
        <taxon>Muridae</taxon>
        <taxon>Murinae</taxon>
        <taxon>Mus</taxon>
        <taxon>Mus</taxon>
    </lineage>
</organism>
<name>K1C9_MOUSE</name>
<accession>Q6RHW0</accession>
<accession>A2A4G3</accession>
<gene>
    <name evidence="9" type="primary">Krt9</name>
    <name evidence="8" type="synonym">K9</name>
    <name evidence="9" type="synonym">Krt1-9</name>
</gene>
<evidence type="ECO:0000250" key="1">
    <source>
        <dbReference type="UniProtKB" id="P13645"/>
    </source>
</evidence>
<evidence type="ECO:0000250" key="2">
    <source>
        <dbReference type="UniProtKB" id="P35527"/>
    </source>
</evidence>
<evidence type="ECO:0000255" key="3"/>
<evidence type="ECO:0000255" key="4">
    <source>
        <dbReference type="PROSITE-ProRule" id="PRU01188"/>
    </source>
</evidence>
<evidence type="ECO:0000256" key="5">
    <source>
        <dbReference type="SAM" id="MobiDB-lite"/>
    </source>
</evidence>
<evidence type="ECO:0000269" key="6">
    <source>
    </source>
</evidence>
<evidence type="ECO:0000305" key="7"/>
<evidence type="ECO:0000312" key="8">
    <source>
        <dbReference type="EMBL" id="AAR89518.1"/>
    </source>
</evidence>
<evidence type="ECO:0000312" key="9">
    <source>
        <dbReference type="MGI" id="MGI:96696"/>
    </source>
</evidence>
<dbReference type="EMBL" id="AY497550">
    <property type="protein sequence ID" value="AAR89518.1"/>
    <property type="molecule type" value="mRNA"/>
</dbReference>
<dbReference type="EMBL" id="GL456158">
    <property type="status" value="NOT_ANNOTATED_CDS"/>
    <property type="molecule type" value="Genomic_DNA"/>
</dbReference>
<dbReference type="CCDS" id="CCDS25412.1"/>
<dbReference type="RefSeq" id="NP_957707.2">
    <property type="nucleotide sequence ID" value="NM_201255.2"/>
</dbReference>
<dbReference type="SMR" id="Q6RHW0"/>
<dbReference type="BioGRID" id="223461">
    <property type="interactions" value="5"/>
</dbReference>
<dbReference type="FunCoup" id="Q6RHW0">
    <property type="interactions" value="229"/>
</dbReference>
<dbReference type="IntAct" id="Q6RHW0">
    <property type="interactions" value="1"/>
</dbReference>
<dbReference type="STRING" id="10090.ENSMUSP00000055255"/>
<dbReference type="iPTMnet" id="Q6RHW0"/>
<dbReference type="PhosphoSitePlus" id="Q6RHW0"/>
<dbReference type="PaxDb" id="10090-ENSMUSP00000055255"/>
<dbReference type="ProteomicsDB" id="269054"/>
<dbReference type="Antibodypedia" id="1544">
    <property type="antibodies" value="213 antibodies from 28 providers"/>
</dbReference>
<dbReference type="DNASU" id="107656"/>
<dbReference type="Ensembl" id="ENSMUST00000059707.3">
    <property type="protein sequence ID" value="ENSMUSP00000055255.3"/>
    <property type="gene ID" value="ENSMUSG00000051617.4"/>
</dbReference>
<dbReference type="GeneID" id="107656"/>
<dbReference type="KEGG" id="mmu:107656"/>
<dbReference type="UCSC" id="uc007lkn.1">
    <property type="organism name" value="mouse"/>
</dbReference>
<dbReference type="AGR" id="MGI:96696"/>
<dbReference type="CTD" id="3857"/>
<dbReference type="MGI" id="MGI:96696">
    <property type="gene designation" value="Krt9"/>
</dbReference>
<dbReference type="VEuPathDB" id="HostDB:ENSMUSG00000051617"/>
<dbReference type="eggNOG" id="ENOG502QTM6">
    <property type="taxonomic scope" value="Eukaryota"/>
</dbReference>
<dbReference type="GeneTree" id="ENSGT00940000162894"/>
<dbReference type="HOGENOM" id="CLU_012560_8_3_1"/>
<dbReference type="InParanoid" id="Q6RHW0"/>
<dbReference type="OMA" id="HQEEMSQ"/>
<dbReference type="OrthoDB" id="2441647at2759"/>
<dbReference type="PhylomeDB" id="Q6RHW0"/>
<dbReference type="TreeFam" id="TF332742"/>
<dbReference type="Reactome" id="R-MMU-6805567">
    <property type="pathway name" value="Keratinization"/>
</dbReference>
<dbReference type="Reactome" id="R-MMU-6809371">
    <property type="pathway name" value="Formation of the cornified envelope"/>
</dbReference>
<dbReference type="BioGRID-ORCS" id="107656">
    <property type="hits" value="3 hits in 77 CRISPR screens"/>
</dbReference>
<dbReference type="PRO" id="PR:Q6RHW0"/>
<dbReference type="Proteomes" id="UP000000589">
    <property type="component" value="Chromosome 11"/>
</dbReference>
<dbReference type="RNAct" id="Q6RHW0">
    <property type="molecule type" value="protein"/>
</dbReference>
<dbReference type="Bgee" id="ENSMUSG00000051617">
    <property type="expression patterns" value="Expressed in undifferentiated genital tubercle and 10 other cell types or tissues"/>
</dbReference>
<dbReference type="GO" id="GO:0005882">
    <property type="term" value="C:intermediate filament"/>
    <property type="evidence" value="ECO:0007669"/>
    <property type="project" value="UniProtKB-KW"/>
</dbReference>
<dbReference type="GO" id="GO:0005198">
    <property type="term" value="F:structural molecule activity"/>
    <property type="evidence" value="ECO:0007669"/>
    <property type="project" value="InterPro"/>
</dbReference>
<dbReference type="GO" id="GO:0045109">
    <property type="term" value="P:intermediate filament organization"/>
    <property type="evidence" value="ECO:0000250"/>
    <property type="project" value="UniProtKB"/>
</dbReference>
<dbReference type="GO" id="GO:0043588">
    <property type="term" value="P:skin development"/>
    <property type="evidence" value="ECO:0000250"/>
    <property type="project" value="UniProtKB"/>
</dbReference>
<dbReference type="GO" id="GO:0007283">
    <property type="term" value="P:spermatogenesis"/>
    <property type="evidence" value="ECO:0000315"/>
    <property type="project" value="UniProtKB"/>
</dbReference>
<dbReference type="FunFam" id="1.20.5.170:FF:000002">
    <property type="entry name" value="Type I keratin KA11"/>
    <property type="match status" value="1"/>
</dbReference>
<dbReference type="Gene3D" id="1.20.5.170">
    <property type="match status" value="1"/>
</dbReference>
<dbReference type="Gene3D" id="1.20.5.500">
    <property type="entry name" value="Single helix bin"/>
    <property type="match status" value="1"/>
</dbReference>
<dbReference type="Gene3D" id="1.20.5.1160">
    <property type="entry name" value="Vasodilator-stimulated phosphoprotein"/>
    <property type="match status" value="1"/>
</dbReference>
<dbReference type="InterPro" id="IPR039008">
    <property type="entry name" value="IF_rod_dom"/>
</dbReference>
<dbReference type="InterPro" id="IPR002957">
    <property type="entry name" value="Keratin_I"/>
</dbReference>
<dbReference type="PANTHER" id="PTHR23239">
    <property type="entry name" value="INTERMEDIATE FILAMENT"/>
    <property type="match status" value="1"/>
</dbReference>
<dbReference type="PANTHER" id="PTHR23239:SF96">
    <property type="entry name" value="KERATIN, TYPE I CYTOSKELETAL 9"/>
    <property type="match status" value="1"/>
</dbReference>
<dbReference type="Pfam" id="PF00038">
    <property type="entry name" value="Filament"/>
    <property type="match status" value="1"/>
</dbReference>
<dbReference type="PRINTS" id="PR01248">
    <property type="entry name" value="TYPE1KERATIN"/>
</dbReference>
<dbReference type="SMART" id="SM01391">
    <property type="entry name" value="Filament"/>
    <property type="match status" value="1"/>
</dbReference>
<dbReference type="SUPFAM" id="SSF64593">
    <property type="entry name" value="Intermediate filament protein, coiled coil region"/>
    <property type="match status" value="2"/>
</dbReference>
<dbReference type="PROSITE" id="PS51842">
    <property type="entry name" value="IF_ROD_2"/>
    <property type="match status" value="1"/>
</dbReference>
<proteinExistence type="evidence at protein level"/>
<sequence>MSCRQSSSSFWSSSSSCGGGGGRGGSGGSMRSSFSRSSRAGGGGGGRFNSSSGFSGGGFSACGGGGGGSFGSSYGGGYGGGFSTGSYSGMFGGGSGGGFGGGSGGGFGGGSGGGFGGGSGGGEGGILNTNEKIVMQNLNSRLASYMEKVLELEESNTAMEKQIQDWYSKRGPKVFQKDNTHYYDTIEDLKDRIVDLTVRNNKTLVDIDNTRMTMDDFRVKLEMEQSLRQGVEGDINGLKKVLDDLVMAKSDLEILLDSLEDEKNALTKNHKEEMSQLTGQNDGDVNVEINVAPSTDLTRVLNDMREEYEQLISKNRQDIEQHYESKMTQIEQQMTNSGQEMESNMKQVSQLQHTIQELNVELQTQLTTKSALEKALEDTKNRYCGQLQQIQEQISELEAQLAEIRAETECQSQEYSILLSIKTRLEKEIETYRELLEGGQQDFESSGAGQIGFGSGKGRQRGSGGSYGGGSGGSYGGGSGGSYGGGSGGSYGGGSGGSYGGGSGGSHGGKSGGSHGGGSGGSYGGESGGSHGGGSGGSYGGGSGGSHGGKSGGGYGGGSSSGGGSGGSYGGGSGGSHGGGSGGSYGGGSGGSHGGKSGGGYGGGSSSGGGSGGSYGGGSGGSHGGKSGGSYGGGSGGSYGGGSGGSHGGKSGGGYGGGSSSGGGSGGSYGGGSGGSHGGKSGGSYGGGSSSGGGSGGSYGGGSGSGGGSGGSYGGGNRRPSQSQSSSKSADCDDDSQEHKMRY</sequence>